<comment type="function">
    <text evidence="1">Purine salvage pathway enzyme that catalyzes the transfer of the ribosyl-5-phosphate group from 5-phospho-alpha-D-ribose 1-diphosphate (PRPP) to the N9 position of the 6-oxopurines guanine and xanthine to form the corresponding ribonucleotides GMP (guanosine 5'-monophosphate) and XMP (xanthosine 5'-monophosphate), with the release of PPi. To a lesser extent, also acts on hypoxanthine.</text>
</comment>
<comment type="catalytic activity">
    <reaction evidence="1">
        <text>GMP + diphosphate = guanine + 5-phospho-alpha-D-ribose 1-diphosphate</text>
        <dbReference type="Rhea" id="RHEA:25424"/>
        <dbReference type="ChEBI" id="CHEBI:16235"/>
        <dbReference type="ChEBI" id="CHEBI:33019"/>
        <dbReference type="ChEBI" id="CHEBI:58017"/>
        <dbReference type="ChEBI" id="CHEBI:58115"/>
    </reaction>
    <physiologicalReaction direction="right-to-left" evidence="1">
        <dbReference type="Rhea" id="RHEA:25426"/>
    </physiologicalReaction>
</comment>
<comment type="catalytic activity">
    <reaction evidence="1">
        <text>XMP + diphosphate = xanthine + 5-phospho-alpha-D-ribose 1-diphosphate</text>
        <dbReference type="Rhea" id="RHEA:10800"/>
        <dbReference type="ChEBI" id="CHEBI:17712"/>
        <dbReference type="ChEBI" id="CHEBI:33019"/>
        <dbReference type="ChEBI" id="CHEBI:57464"/>
        <dbReference type="ChEBI" id="CHEBI:58017"/>
        <dbReference type="EC" id="2.4.2.22"/>
    </reaction>
    <physiologicalReaction direction="right-to-left" evidence="1">
        <dbReference type="Rhea" id="RHEA:10802"/>
    </physiologicalReaction>
</comment>
<comment type="catalytic activity">
    <reaction evidence="1">
        <text>IMP + diphosphate = hypoxanthine + 5-phospho-alpha-D-ribose 1-diphosphate</text>
        <dbReference type="Rhea" id="RHEA:17973"/>
        <dbReference type="ChEBI" id="CHEBI:17368"/>
        <dbReference type="ChEBI" id="CHEBI:33019"/>
        <dbReference type="ChEBI" id="CHEBI:58017"/>
        <dbReference type="ChEBI" id="CHEBI:58053"/>
    </reaction>
    <physiologicalReaction direction="right-to-left" evidence="1">
        <dbReference type="Rhea" id="RHEA:17975"/>
    </physiologicalReaction>
</comment>
<comment type="cofactor">
    <cofactor evidence="1">
        <name>Mg(2+)</name>
        <dbReference type="ChEBI" id="CHEBI:18420"/>
    </cofactor>
</comment>
<comment type="pathway">
    <text evidence="1">Purine metabolism; GMP biosynthesis via salvage pathway; GMP from guanine: step 1/1.</text>
</comment>
<comment type="pathway">
    <text evidence="1">Purine metabolism; XMP biosynthesis via salvage pathway; XMP from xanthine: step 1/1.</text>
</comment>
<comment type="subunit">
    <text evidence="1">Homotetramer.</text>
</comment>
<comment type="subcellular location">
    <subcellularLocation>
        <location evidence="1">Cell inner membrane</location>
        <topology evidence="1">Peripheral membrane protein</topology>
    </subcellularLocation>
</comment>
<comment type="similarity">
    <text evidence="1">Belongs to the purine/pyrimidine phosphoribosyltransferase family. XGPT subfamily.</text>
</comment>
<organism>
    <name type="scientific">Salmonella paratyphi A (strain AKU_12601)</name>
    <dbReference type="NCBI Taxonomy" id="554290"/>
    <lineage>
        <taxon>Bacteria</taxon>
        <taxon>Pseudomonadati</taxon>
        <taxon>Pseudomonadota</taxon>
        <taxon>Gammaproteobacteria</taxon>
        <taxon>Enterobacterales</taxon>
        <taxon>Enterobacteriaceae</taxon>
        <taxon>Salmonella</taxon>
    </lineage>
</organism>
<keyword id="KW-0997">Cell inner membrane</keyword>
<keyword id="KW-1003">Cell membrane</keyword>
<keyword id="KW-0328">Glycosyltransferase</keyword>
<keyword id="KW-0460">Magnesium</keyword>
<keyword id="KW-0472">Membrane</keyword>
<keyword id="KW-0479">Metal-binding</keyword>
<keyword id="KW-0660">Purine salvage</keyword>
<keyword id="KW-0808">Transferase</keyword>
<sequence length="152" mass="16970">MSEKYVVTWDMLQIHARKLASRLMPSEQWKGIIAVSRGGLVPGALLARELGIRHVDTVCISSYDHDNQRELKVLKRAEGDGEGFIVIDDLVDTGGTAVAIREMYPKAHFVTIFAKPAGRPLVDDYVIDIPQNTWIEQPWDMGVVFVPPISGR</sequence>
<gene>
    <name evidence="1" type="primary">gpt</name>
    <name type="ordered locus">SSPA2276</name>
</gene>
<proteinExistence type="inferred from homology"/>
<reference key="1">
    <citation type="journal article" date="2009" name="BMC Genomics">
        <title>Pseudogene accumulation in the evolutionary histories of Salmonella enterica serovars Paratyphi A and Typhi.</title>
        <authorList>
            <person name="Holt K.E."/>
            <person name="Thomson N.R."/>
            <person name="Wain J."/>
            <person name="Langridge G.C."/>
            <person name="Hasan R."/>
            <person name="Bhutta Z.A."/>
            <person name="Quail M.A."/>
            <person name="Norbertczak H."/>
            <person name="Walker D."/>
            <person name="Simmonds M."/>
            <person name="White B."/>
            <person name="Bason N."/>
            <person name="Mungall K."/>
            <person name="Dougan G."/>
            <person name="Parkhill J."/>
        </authorList>
    </citation>
    <scope>NUCLEOTIDE SEQUENCE [LARGE SCALE GENOMIC DNA]</scope>
    <source>
        <strain>AKU_12601</strain>
    </source>
</reference>
<name>XGPT_SALPK</name>
<protein>
    <recommendedName>
        <fullName evidence="1">Xanthine-guanine phosphoribosyltransferase</fullName>
        <shortName evidence="1">XGPRT</shortName>
        <ecNumber evidence="1">2.4.2.-</ecNumber>
        <ecNumber evidence="1">2.4.2.22</ecNumber>
    </recommendedName>
    <alternativeName>
        <fullName evidence="1">Xanthine phosphoribosyltransferase</fullName>
    </alternativeName>
</protein>
<feature type="chain" id="PRO_1000188759" description="Xanthine-guanine phosphoribosyltransferase">
    <location>
        <begin position="1"/>
        <end position="152"/>
    </location>
</feature>
<feature type="binding site" evidence="1">
    <location>
        <begin position="37"/>
        <end position="38"/>
    </location>
    <ligand>
        <name>5-phospho-alpha-D-ribose 1-diphosphate</name>
        <dbReference type="ChEBI" id="CHEBI:58017"/>
    </ligand>
</feature>
<feature type="binding site" evidence="1">
    <location>
        <position position="69"/>
    </location>
    <ligand>
        <name>5-phospho-alpha-D-ribose 1-diphosphate</name>
        <dbReference type="ChEBI" id="CHEBI:58017"/>
    </ligand>
</feature>
<feature type="binding site" evidence="1">
    <location>
        <position position="69"/>
    </location>
    <ligand>
        <name>GMP</name>
        <dbReference type="ChEBI" id="CHEBI:58115"/>
    </ligand>
</feature>
<feature type="binding site" evidence="1">
    <location>
        <begin position="88"/>
        <end position="96"/>
    </location>
    <ligand>
        <name>5-phospho-alpha-D-ribose 1-diphosphate</name>
        <dbReference type="ChEBI" id="CHEBI:58017"/>
    </ligand>
</feature>
<feature type="binding site" evidence="1">
    <location>
        <position position="89"/>
    </location>
    <ligand>
        <name>Mg(2+)</name>
        <dbReference type="ChEBI" id="CHEBI:18420"/>
    </ligand>
</feature>
<feature type="binding site" evidence="1">
    <location>
        <begin position="92"/>
        <end position="96"/>
    </location>
    <ligand>
        <name>GMP</name>
        <dbReference type="ChEBI" id="CHEBI:58115"/>
    </ligand>
</feature>
<feature type="binding site" evidence="1">
    <location>
        <position position="92"/>
    </location>
    <ligand>
        <name>guanine</name>
        <dbReference type="ChEBI" id="CHEBI:16235"/>
    </ligand>
</feature>
<feature type="binding site" evidence="1">
    <location>
        <position position="92"/>
    </location>
    <ligand>
        <name>xanthine</name>
        <dbReference type="ChEBI" id="CHEBI:17712"/>
    </ligand>
</feature>
<feature type="binding site" evidence="1">
    <location>
        <begin position="134"/>
        <end position="135"/>
    </location>
    <ligand>
        <name>GMP</name>
        <dbReference type="ChEBI" id="CHEBI:58115"/>
    </ligand>
</feature>
<feature type="binding site" evidence="1">
    <location>
        <position position="135"/>
    </location>
    <ligand>
        <name>guanine</name>
        <dbReference type="ChEBI" id="CHEBI:16235"/>
    </ligand>
</feature>
<feature type="binding site" evidence="1">
    <location>
        <position position="135"/>
    </location>
    <ligand>
        <name>xanthine</name>
        <dbReference type="ChEBI" id="CHEBI:17712"/>
    </ligand>
</feature>
<evidence type="ECO:0000255" key="1">
    <source>
        <dbReference type="HAMAP-Rule" id="MF_01903"/>
    </source>
</evidence>
<accession>B5BDQ2</accession>
<dbReference type="EC" id="2.4.2.-" evidence="1"/>
<dbReference type="EC" id="2.4.2.22" evidence="1"/>
<dbReference type="EMBL" id="FM200053">
    <property type="protein sequence ID" value="CAR60499.1"/>
    <property type="molecule type" value="Genomic_DNA"/>
</dbReference>
<dbReference type="RefSeq" id="WP_001292018.1">
    <property type="nucleotide sequence ID" value="NC_011147.1"/>
</dbReference>
<dbReference type="SMR" id="B5BDQ2"/>
<dbReference type="GeneID" id="66754798"/>
<dbReference type="KEGG" id="sek:SSPA2276"/>
<dbReference type="HOGENOM" id="CLU_080904_3_0_6"/>
<dbReference type="UniPathway" id="UPA00602">
    <property type="reaction ID" value="UER00658"/>
</dbReference>
<dbReference type="UniPathway" id="UPA00909">
    <property type="reaction ID" value="UER00887"/>
</dbReference>
<dbReference type="Proteomes" id="UP000001869">
    <property type="component" value="Chromosome"/>
</dbReference>
<dbReference type="GO" id="GO:0005829">
    <property type="term" value="C:cytosol"/>
    <property type="evidence" value="ECO:0007669"/>
    <property type="project" value="TreeGrafter"/>
</dbReference>
<dbReference type="GO" id="GO:0005886">
    <property type="term" value="C:plasma membrane"/>
    <property type="evidence" value="ECO:0007669"/>
    <property type="project" value="UniProtKB-SubCell"/>
</dbReference>
<dbReference type="GO" id="GO:0052657">
    <property type="term" value="F:guanine phosphoribosyltransferase activity"/>
    <property type="evidence" value="ECO:0007669"/>
    <property type="project" value="RHEA"/>
</dbReference>
<dbReference type="GO" id="GO:0004422">
    <property type="term" value="F:hypoxanthine phosphoribosyltransferase activity"/>
    <property type="evidence" value="ECO:0007669"/>
    <property type="project" value="RHEA"/>
</dbReference>
<dbReference type="GO" id="GO:0000287">
    <property type="term" value="F:magnesium ion binding"/>
    <property type="evidence" value="ECO:0007669"/>
    <property type="project" value="UniProtKB-UniRule"/>
</dbReference>
<dbReference type="GO" id="GO:0000310">
    <property type="term" value="F:xanthine phosphoribosyltransferase activity"/>
    <property type="evidence" value="ECO:0007669"/>
    <property type="project" value="UniProtKB-UniRule"/>
</dbReference>
<dbReference type="GO" id="GO:0032263">
    <property type="term" value="P:GMP salvage"/>
    <property type="evidence" value="ECO:0007669"/>
    <property type="project" value="UniProtKB-UniRule"/>
</dbReference>
<dbReference type="GO" id="GO:0032264">
    <property type="term" value="P:IMP salvage"/>
    <property type="evidence" value="ECO:0007669"/>
    <property type="project" value="TreeGrafter"/>
</dbReference>
<dbReference type="GO" id="GO:0006166">
    <property type="term" value="P:purine ribonucleoside salvage"/>
    <property type="evidence" value="ECO:0007669"/>
    <property type="project" value="UniProtKB-KW"/>
</dbReference>
<dbReference type="GO" id="GO:0032265">
    <property type="term" value="P:XMP salvage"/>
    <property type="evidence" value="ECO:0007669"/>
    <property type="project" value="UniProtKB-UniRule"/>
</dbReference>
<dbReference type="CDD" id="cd06223">
    <property type="entry name" value="PRTases_typeI"/>
    <property type="match status" value="1"/>
</dbReference>
<dbReference type="FunFam" id="3.40.50.2020:FF:000009">
    <property type="entry name" value="Xanthine phosphoribosyltransferase"/>
    <property type="match status" value="1"/>
</dbReference>
<dbReference type="Gene3D" id="3.40.50.2020">
    <property type="match status" value="1"/>
</dbReference>
<dbReference type="HAMAP" id="MF_01903">
    <property type="entry name" value="XGPRT"/>
    <property type="match status" value="1"/>
</dbReference>
<dbReference type="InterPro" id="IPR000836">
    <property type="entry name" value="PRibTrfase_dom"/>
</dbReference>
<dbReference type="InterPro" id="IPR029057">
    <property type="entry name" value="PRTase-like"/>
</dbReference>
<dbReference type="InterPro" id="IPR023747">
    <property type="entry name" value="Xanthine_Guanine_PRibTrfase"/>
</dbReference>
<dbReference type="NCBIfam" id="NF006613">
    <property type="entry name" value="PRK09177.1"/>
    <property type="match status" value="1"/>
</dbReference>
<dbReference type="PANTHER" id="PTHR39563">
    <property type="entry name" value="XANTHINE PHOSPHORIBOSYLTRANSFERASE"/>
    <property type="match status" value="1"/>
</dbReference>
<dbReference type="PANTHER" id="PTHR39563:SF1">
    <property type="entry name" value="XANTHINE-GUANINE PHOSPHORIBOSYLTRANSFERASE"/>
    <property type="match status" value="1"/>
</dbReference>
<dbReference type="Pfam" id="PF00156">
    <property type="entry name" value="Pribosyltran"/>
    <property type="match status" value="1"/>
</dbReference>
<dbReference type="SUPFAM" id="SSF53271">
    <property type="entry name" value="PRTase-like"/>
    <property type="match status" value="1"/>
</dbReference>
<dbReference type="PROSITE" id="PS00103">
    <property type="entry name" value="PUR_PYR_PR_TRANSFER"/>
    <property type="match status" value="1"/>
</dbReference>